<dbReference type="EC" id="6.1.1.6"/>
<dbReference type="EC" id="2.3.2.3"/>
<dbReference type="EMBL" id="AM408590">
    <property type="protein sequence ID" value="CAL71666.1"/>
    <property type="molecule type" value="Genomic_DNA"/>
</dbReference>
<dbReference type="SMR" id="A1KJ57"/>
<dbReference type="KEGG" id="mbb:BCG_1679c"/>
<dbReference type="HOGENOM" id="CLU_008255_2_0_11"/>
<dbReference type="Proteomes" id="UP000001472">
    <property type="component" value="Chromosome"/>
</dbReference>
<dbReference type="GO" id="GO:0005829">
    <property type="term" value="C:cytosol"/>
    <property type="evidence" value="ECO:0007669"/>
    <property type="project" value="TreeGrafter"/>
</dbReference>
<dbReference type="GO" id="GO:0005886">
    <property type="term" value="C:plasma membrane"/>
    <property type="evidence" value="ECO:0007669"/>
    <property type="project" value="UniProtKB-SubCell"/>
</dbReference>
<dbReference type="GO" id="GO:0005524">
    <property type="term" value="F:ATP binding"/>
    <property type="evidence" value="ECO:0007669"/>
    <property type="project" value="UniProtKB-UniRule"/>
</dbReference>
<dbReference type="GO" id="GO:0003677">
    <property type="term" value="F:DNA binding"/>
    <property type="evidence" value="ECO:0007669"/>
    <property type="project" value="UniProtKB-KW"/>
</dbReference>
<dbReference type="GO" id="GO:0004824">
    <property type="term" value="F:lysine-tRNA ligase activity"/>
    <property type="evidence" value="ECO:0007669"/>
    <property type="project" value="UniProtKB-UniRule"/>
</dbReference>
<dbReference type="GO" id="GO:0000287">
    <property type="term" value="F:magnesium ion binding"/>
    <property type="evidence" value="ECO:0007669"/>
    <property type="project" value="UniProtKB-UniRule"/>
</dbReference>
<dbReference type="GO" id="GO:0050071">
    <property type="term" value="F:phosphatidylglycerol lysyltransferase activity"/>
    <property type="evidence" value="ECO:0007669"/>
    <property type="project" value="UniProtKB-EC"/>
</dbReference>
<dbReference type="GO" id="GO:0000049">
    <property type="term" value="F:tRNA binding"/>
    <property type="evidence" value="ECO:0007669"/>
    <property type="project" value="TreeGrafter"/>
</dbReference>
<dbReference type="GO" id="GO:0006629">
    <property type="term" value="P:lipid metabolic process"/>
    <property type="evidence" value="ECO:0007669"/>
    <property type="project" value="UniProtKB-KW"/>
</dbReference>
<dbReference type="GO" id="GO:0006430">
    <property type="term" value="P:lysyl-tRNA aminoacylation"/>
    <property type="evidence" value="ECO:0007669"/>
    <property type="project" value="UniProtKB-UniRule"/>
</dbReference>
<dbReference type="GO" id="GO:0046677">
    <property type="term" value="P:response to antibiotic"/>
    <property type="evidence" value="ECO:0007669"/>
    <property type="project" value="UniProtKB-KW"/>
</dbReference>
<dbReference type="CDD" id="cd04322">
    <property type="entry name" value="LysRS_N"/>
    <property type="match status" value="1"/>
</dbReference>
<dbReference type="FunFam" id="2.40.50.140:FF:000404">
    <property type="entry name" value="Lysylphosphatidylglycerol biosynthesis bifunctional protein LysX"/>
    <property type="match status" value="1"/>
</dbReference>
<dbReference type="Gene3D" id="3.30.930.10">
    <property type="entry name" value="Bira Bifunctional Protein, Domain 2"/>
    <property type="match status" value="1"/>
</dbReference>
<dbReference type="Gene3D" id="2.40.50.140">
    <property type="entry name" value="Nucleic acid-binding proteins"/>
    <property type="match status" value="1"/>
</dbReference>
<dbReference type="HAMAP" id="MF_00252">
    <property type="entry name" value="Lys_tRNA_synth_class2"/>
    <property type="match status" value="1"/>
</dbReference>
<dbReference type="InterPro" id="IPR004364">
    <property type="entry name" value="Aa-tRNA-synt_II"/>
</dbReference>
<dbReference type="InterPro" id="IPR006195">
    <property type="entry name" value="aa-tRNA-synth_II"/>
</dbReference>
<dbReference type="InterPro" id="IPR045864">
    <property type="entry name" value="aa-tRNA-synth_II/BPL/LPL"/>
</dbReference>
<dbReference type="InterPro" id="IPR024320">
    <property type="entry name" value="LPG_synthase_C"/>
</dbReference>
<dbReference type="InterPro" id="IPR002313">
    <property type="entry name" value="Lys-tRNA-ligase_II"/>
</dbReference>
<dbReference type="InterPro" id="IPR044136">
    <property type="entry name" value="Lys-tRNA-ligase_II_N"/>
</dbReference>
<dbReference type="InterPro" id="IPR018149">
    <property type="entry name" value="Lys-tRNA-synth_II_C"/>
</dbReference>
<dbReference type="InterPro" id="IPR012340">
    <property type="entry name" value="NA-bd_OB-fold"/>
</dbReference>
<dbReference type="InterPro" id="IPR004365">
    <property type="entry name" value="NA-bd_OB_tRNA"/>
</dbReference>
<dbReference type="InterPro" id="IPR031553">
    <property type="entry name" value="tRNA-synt_2_TM"/>
</dbReference>
<dbReference type="NCBIfam" id="TIGR00499">
    <property type="entry name" value="lysS_bact"/>
    <property type="match status" value="1"/>
</dbReference>
<dbReference type="NCBIfam" id="NF001756">
    <property type="entry name" value="PRK00484.1"/>
    <property type="match status" value="1"/>
</dbReference>
<dbReference type="NCBIfam" id="NF002821">
    <property type="entry name" value="PRK02983.1"/>
    <property type="match status" value="1"/>
</dbReference>
<dbReference type="PANTHER" id="PTHR42918:SF15">
    <property type="entry name" value="LYSINE--TRNA LIGASE, CHLOROPLASTIC_MITOCHONDRIAL"/>
    <property type="match status" value="1"/>
</dbReference>
<dbReference type="PANTHER" id="PTHR42918">
    <property type="entry name" value="LYSYL-TRNA SYNTHETASE"/>
    <property type="match status" value="1"/>
</dbReference>
<dbReference type="Pfam" id="PF09924">
    <property type="entry name" value="LPG_synthase_C"/>
    <property type="match status" value="1"/>
</dbReference>
<dbReference type="Pfam" id="PF00152">
    <property type="entry name" value="tRNA-synt_2"/>
    <property type="match status" value="1"/>
</dbReference>
<dbReference type="Pfam" id="PF16995">
    <property type="entry name" value="tRNA-synt_2_TM"/>
    <property type="match status" value="1"/>
</dbReference>
<dbReference type="Pfam" id="PF01336">
    <property type="entry name" value="tRNA_anti-codon"/>
    <property type="match status" value="1"/>
</dbReference>
<dbReference type="PRINTS" id="PR00982">
    <property type="entry name" value="TRNASYNTHLYS"/>
</dbReference>
<dbReference type="SUPFAM" id="SSF55681">
    <property type="entry name" value="Class II aaRS and biotin synthetases"/>
    <property type="match status" value="1"/>
</dbReference>
<dbReference type="SUPFAM" id="SSF50249">
    <property type="entry name" value="Nucleic acid-binding proteins"/>
    <property type="match status" value="1"/>
</dbReference>
<dbReference type="PROSITE" id="PS50862">
    <property type="entry name" value="AA_TRNA_LIGASE_II"/>
    <property type="match status" value="1"/>
</dbReference>
<proteinExistence type="inferred from homology"/>
<organism>
    <name type="scientific">Mycobacterium bovis (strain BCG / Pasteur 1173P2)</name>
    <dbReference type="NCBI Taxonomy" id="410289"/>
    <lineage>
        <taxon>Bacteria</taxon>
        <taxon>Bacillati</taxon>
        <taxon>Actinomycetota</taxon>
        <taxon>Actinomycetes</taxon>
        <taxon>Mycobacteriales</taxon>
        <taxon>Mycobacteriaceae</taxon>
        <taxon>Mycobacterium</taxon>
        <taxon>Mycobacterium tuberculosis complex</taxon>
    </lineage>
</organism>
<gene>
    <name type="primary">lysX</name>
    <name type="ordered locus">BCG_1679c</name>
</gene>
<reference key="1">
    <citation type="journal article" date="2007" name="Proc. Natl. Acad. Sci. U.S.A.">
        <title>Genome plasticity of BCG and impact on vaccine efficacy.</title>
        <authorList>
            <person name="Brosch R."/>
            <person name="Gordon S.V."/>
            <person name="Garnier T."/>
            <person name="Eiglmeier K."/>
            <person name="Frigui W."/>
            <person name="Valenti P."/>
            <person name="Dos Santos S."/>
            <person name="Duthoy S."/>
            <person name="Lacroix C."/>
            <person name="Garcia-Pelayo C."/>
            <person name="Inwald J.K."/>
            <person name="Golby P."/>
            <person name="Garcia J.N."/>
            <person name="Hewinson R.G."/>
            <person name="Behr M.A."/>
            <person name="Quail M.A."/>
            <person name="Churcher C."/>
            <person name="Barrell B.G."/>
            <person name="Parkhill J."/>
            <person name="Cole S.T."/>
        </authorList>
    </citation>
    <scope>NUCLEOTIDE SEQUENCE [LARGE SCALE GENOMIC DNA]</scope>
    <source>
        <strain>BCG / Pasteur 1173P2</strain>
    </source>
</reference>
<sequence length="1172" mass="128196">MGLHLTVPGLRRDGRGVQSNSHDTSSKTTADISRCPQHTDAGLQRAATPGISRLLGISSRSVTLTKPRSATRGNSRYHWVPAAAGWTVGVIATLSLLASVSPLIRWIIKVPREFINDYLFNFPDTNFAWSFVLALLAAALTARKRIAWLVLLANMVLAAVVNAAEIAAGGNTAAESFGENLGFAVHVVAIVVLVLGYREFWAKVRRGALFRAAAVWLAGAVVGIVASWGLVELFPGSLAPDERLGYAANRVVGFALADPDLFTGRPHVFLNAIFGLFGAFALIGAAIVLFLSQRADNALTGEDESAIRGLLDLYGKDDSLGYFATRRDKSVVFASSGRACITYRVEVGVCLASGDPVGDHRAWPQAVDAWLRLCQTYGWAPGVMGASSQGAQTYREAGLTALELGDEAILRPADFKLSGPEMRGVRQAVTRARRAGLTVRIRRHRDIAEDEMAQTITRADSWRDTETERGFSMALGRLGDPADSDCLLVEAIDPHNQVLAMLSLVPWGTTGVSLDLMRRSPQSPNGTIELMVSELALHAESLGITRISLNFAVFRAAFEQGAQLGAGPVARLWRGLLVFFSRWWQLETLYRSNMKYQPEWVPRYACYEDARVIPRVGVASVIAEGFLVLPFSRRNRVHTGHHPAVPERLAATGLLHHDGSAPDVSGLRQVGLTNGDGVERRLPEQVRVRFDKLEKLRSSGIDAFPVGRPPSHTVAQALAADHQASVSVSGRIMRIRNYGGVLFAQLRDWSGEMQVLLDNSRLDQGCAAEFNAATDLGDLVEMTGHMGASKTGTPSLIVSGWRLIGKCLRPLPNKWKGLLDPEARVRTRYLDLAVNAESRALITARSSVLRAVRETLFAKGFVEVETPILQQLHGGATARPFVTHINTYSMDLFLRIAPELYLKRLCVGGVERVFELGRAFRNEGVDFSHNPEFTLLEAYQAHAGYLEWIDGCRELIQNAAQAANGAPIAMRPRTDKGSDGTRHHLEPVDISGIWPVRTVHDAISEALGERIDADTGLTTLRKLCDAAGVPYRTQWDAGAVVLELYEHLVECRTEQPTFYIDFPTSVSPLTRPHRSKRGVAERWDLVAWGIELGTAYSELTDPVEQRRRLQEQSLLAAGGDPEAMELDEDFLQAMEYAMPPTGGLGMGIDRVVMLITGRSIRETLPFPLAKPH</sequence>
<comment type="function">
    <text evidence="1">Catalyzes the production of L-lysyl-tRNA(Lys)transfer and the transfer of a lysyl group from L-lysyl-tRNA(Lys) to membrane-bound phosphatidylglycerol (PG), which produces lysylphosphatidylglycerol (LPG), one of the components of the bacterial membrane with a positive net charge. LPG synthesis contributes to the resistance to cationic antimicrobial peptides (CAMPs) and likely protects M.tuberculosis against the CAMPs produced by competiting microorganisms (bacteriocins). In fact, the modification of anionic phosphatidylglycerol with positively charged L-lysine results in repulsion of the peptides (By similarity).</text>
</comment>
<comment type="catalytic activity">
    <reaction>
        <text>tRNA(Lys) + L-lysine + ATP = L-lysyl-tRNA(Lys) + AMP + diphosphate</text>
        <dbReference type="Rhea" id="RHEA:20792"/>
        <dbReference type="Rhea" id="RHEA-COMP:9696"/>
        <dbReference type="Rhea" id="RHEA-COMP:9697"/>
        <dbReference type="ChEBI" id="CHEBI:30616"/>
        <dbReference type="ChEBI" id="CHEBI:32551"/>
        <dbReference type="ChEBI" id="CHEBI:33019"/>
        <dbReference type="ChEBI" id="CHEBI:78442"/>
        <dbReference type="ChEBI" id="CHEBI:78529"/>
        <dbReference type="ChEBI" id="CHEBI:456215"/>
        <dbReference type="EC" id="6.1.1.6"/>
    </reaction>
</comment>
<comment type="catalytic activity">
    <reaction>
        <text>L-lysyl-tRNA(Lys) + a 1,2-diacyl-sn-glycero-3-phospho-(1'-sn-glycerol) = a 1,2-diacyl-sn-glycero-3-phospho-1'-(3'-O-L-lysyl)-sn-glycerol + tRNA(Lys)</text>
        <dbReference type="Rhea" id="RHEA:10668"/>
        <dbReference type="Rhea" id="RHEA-COMP:9696"/>
        <dbReference type="Rhea" id="RHEA-COMP:9697"/>
        <dbReference type="ChEBI" id="CHEBI:64716"/>
        <dbReference type="ChEBI" id="CHEBI:75792"/>
        <dbReference type="ChEBI" id="CHEBI:78442"/>
        <dbReference type="ChEBI" id="CHEBI:78529"/>
        <dbReference type="EC" id="2.3.2.3"/>
    </reaction>
</comment>
<comment type="cofactor">
    <cofactor evidence="1">
        <name>Mg(2+)</name>
        <dbReference type="ChEBI" id="CHEBI:18420"/>
    </cofactor>
    <text evidence="1">Binds 3 Mg(2+) ions per subunit.</text>
</comment>
<comment type="subcellular location">
    <subcellularLocation>
        <location evidence="4">Cell membrane</location>
        <topology evidence="4">Multi-pass membrane protein</topology>
    </subcellularLocation>
</comment>
<comment type="similarity">
    <text evidence="4">In the N-terminal section; belongs to the LPG synthetase family.</text>
</comment>
<comment type="similarity">
    <text evidence="4">In the C-terminal section; belongs to the class-II aminoacyl-tRNA synthetase family.</text>
</comment>
<protein>
    <recommendedName>
        <fullName>Lysylphosphatidylglycerol biosynthesis bifunctional protein LysX</fullName>
    </recommendedName>
    <domain>
        <recommendedName>
            <fullName>Lysine--tRNA ligase</fullName>
            <ecNumber>6.1.1.6</ecNumber>
        </recommendedName>
        <alternativeName>
            <fullName>Lysyl-tRNA synthetase</fullName>
            <shortName>LysRS</shortName>
        </alternativeName>
    </domain>
    <domain>
        <recommendedName>
            <fullName>Phosphatidylglycerol lysyltransferase</fullName>
            <ecNumber>2.3.2.3</ecNumber>
        </recommendedName>
        <alternativeName>
            <fullName>Lysylphosphatidylglycerol synthetase</fullName>
            <shortName>LPG synthetase</shortName>
        </alternativeName>
    </domain>
</protein>
<feature type="chain" id="PRO_0000394317" description="Lysylphosphatidylglycerol biosynthesis bifunctional protein LysX">
    <location>
        <begin position="1"/>
        <end position="1172"/>
    </location>
</feature>
<feature type="transmembrane region" description="Helical" evidence="2">
    <location>
        <begin position="80"/>
        <end position="100"/>
    </location>
</feature>
<feature type="transmembrane region" description="Helical" evidence="2">
    <location>
        <begin position="122"/>
        <end position="142"/>
    </location>
</feature>
<feature type="transmembrane region" description="Helical" evidence="2">
    <location>
        <begin position="146"/>
        <end position="166"/>
    </location>
</feature>
<feature type="transmembrane region" description="Helical" evidence="2">
    <location>
        <begin position="177"/>
        <end position="197"/>
    </location>
</feature>
<feature type="transmembrane region" description="Helical" evidence="2">
    <location>
        <begin position="214"/>
        <end position="234"/>
    </location>
</feature>
<feature type="transmembrane region" description="Helical" evidence="2">
    <location>
        <begin position="272"/>
        <end position="292"/>
    </location>
</feature>
<feature type="transmembrane region" description="Helical" evidence="2">
    <location>
        <begin position="612"/>
        <end position="632"/>
    </location>
</feature>
<feature type="DNA-binding region" description="OB">
    <location>
        <begin position="726"/>
        <end position="804"/>
    </location>
</feature>
<feature type="region of interest" description="Phosphatidylglycerol lysyltransferase">
    <location>
        <begin position="1"/>
        <end position="663"/>
    </location>
</feature>
<feature type="region of interest" description="Disordered" evidence="3">
    <location>
        <begin position="1"/>
        <end position="34"/>
    </location>
</feature>
<feature type="region of interest" description="Lysine--tRNA ligase">
    <location>
        <begin position="664"/>
        <end position="1172"/>
    </location>
</feature>
<feature type="compositionally biased region" description="Polar residues" evidence="3">
    <location>
        <begin position="17"/>
        <end position="31"/>
    </location>
</feature>
<feature type="binding site" evidence="1">
    <location>
        <position position="1084"/>
    </location>
    <ligand>
        <name>Mg(2+)</name>
        <dbReference type="ChEBI" id="CHEBI:18420"/>
        <label>1</label>
    </ligand>
</feature>
<feature type="binding site" evidence="1">
    <location>
        <position position="1091"/>
    </location>
    <ligand>
        <name>Mg(2+)</name>
        <dbReference type="ChEBI" id="CHEBI:18420"/>
        <label>1</label>
    </ligand>
</feature>
<feature type="binding site" evidence="1">
    <location>
        <position position="1091"/>
    </location>
    <ligand>
        <name>Mg(2+)</name>
        <dbReference type="ChEBI" id="CHEBI:18420"/>
        <label>2</label>
    </ligand>
</feature>
<accession>A1KJ57</accession>
<keyword id="KW-0030">Aminoacyl-tRNA synthetase</keyword>
<keyword id="KW-0046">Antibiotic resistance</keyword>
<keyword id="KW-0067">ATP-binding</keyword>
<keyword id="KW-1003">Cell membrane</keyword>
<keyword id="KW-0238">DNA-binding</keyword>
<keyword id="KW-0436">Ligase</keyword>
<keyword id="KW-0443">Lipid metabolism</keyword>
<keyword id="KW-0460">Magnesium</keyword>
<keyword id="KW-0472">Membrane</keyword>
<keyword id="KW-0479">Metal-binding</keyword>
<keyword id="KW-0511">Multifunctional enzyme</keyword>
<keyword id="KW-0547">Nucleotide-binding</keyword>
<keyword id="KW-0808">Transferase</keyword>
<keyword id="KW-0812">Transmembrane</keyword>
<keyword id="KW-1133">Transmembrane helix</keyword>
<evidence type="ECO:0000250" key="1"/>
<evidence type="ECO:0000255" key="2"/>
<evidence type="ECO:0000256" key="3">
    <source>
        <dbReference type="SAM" id="MobiDB-lite"/>
    </source>
</evidence>
<evidence type="ECO:0000305" key="4"/>
<name>LYSX_MYCBP</name>